<sequence>MVDQRHIRNFCIIAHIDHGKSTLADRLIEFTGVLTKREMTDQVLDNMELERERGITIKAQSVRMDYVADDGEQYVLNLIDTPGHVDFTYEVSRALAACEGALLVVDASQGIEAQTLANVYMALEHDLEIIPVINKIDLPAADPEKVKKEIEEVIGLDTSIAILASAKTGIGMKEILEAVVNFVPPPKGDRRAPLRALIYDSFYDSYKGVITYFRIFEGTVRKGDRIRFMATGKEFIVDELYIFRPGLTPVEELTAGEVGALAATIREVKHVRVGDTITLADNPAAEPLPGYRKATPMVFTGLYPVETNDYGRLRDALEKLQLNDASLSFEPETSEALGFGFRCGFLGLLHMDVIQERLEREFDLNLITTAPNVVYRVNMTSGEQIMIENPANWPDPSKIESVEEPVVRASIITPTEYVGPLMELCQDRRGTFLNMEYLNEKRVNLHYKLPLAEIMYDFFDQLKTRSRGYASFDYEVTGYEPSDMVKMDILVHGQPVDALSCIVHREKAQKLGRALVQKLRKLIPRHLFEVPIQAAVGNKILARENIAPLRKDVLAKCYGGDVTRKRKLLEKQKEGKKRMKAVGSVEIPQEAFMAVLSTDPDED</sequence>
<proteinExistence type="inferred from homology"/>
<feature type="chain" id="PRO_0000176358" description="Elongation factor 4">
    <location>
        <begin position="1"/>
        <end position="603"/>
    </location>
</feature>
<feature type="domain" description="tr-type G">
    <location>
        <begin position="5"/>
        <end position="187"/>
    </location>
</feature>
<feature type="binding site" evidence="1">
    <location>
        <begin position="17"/>
        <end position="22"/>
    </location>
    <ligand>
        <name>GTP</name>
        <dbReference type="ChEBI" id="CHEBI:37565"/>
    </ligand>
</feature>
<feature type="binding site" evidence="1">
    <location>
        <begin position="134"/>
        <end position="137"/>
    </location>
    <ligand>
        <name>GTP</name>
        <dbReference type="ChEBI" id="CHEBI:37565"/>
    </ligand>
</feature>
<protein>
    <recommendedName>
        <fullName evidence="1">Elongation factor 4</fullName>
        <shortName evidence="1">EF-4</shortName>
        <ecNumber evidence="1">3.6.5.n1</ecNumber>
    </recommendedName>
    <alternativeName>
        <fullName evidence="1">Ribosomal back-translocase LepA</fullName>
    </alternativeName>
</protein>
<keyword id="KW-1003">Cell membrane</keyword>
<keyword id="KW-0342">GTP-binding</keyword>
<keyword id="KW-0378">Hydrolase</keyword>
<keyword id="KW-0472">Membrane</keyword>
<keyword id="KW-0547">Nucleotide-binding</keyword>
<keyword id="KW-0648">Protein biosynthesis</keyword>
<keyword id="KW-1185">Reference proteome</keyword>
<organism>
    <name type="scientific">Symbiobacterium thermophilum (strain DSM 24528 / JCM 14929 / IAM 14863 / T)</name>
    <dbReference type="NCBI Taxonomy" id="292459"/>
    <lineage>
        <taxon>Bacteria</taxon>
        <taxon>Bacillati</taxon>
        <taxon>Bacillota</taxon>
        <taxon>Clostridia</taxon>
        <taxon>Eubacteriales</taxon>
        <taxon>Symbiobacteriaceae</taxon>
        <taxon>Symbiobacterium</taxon>
    </lineage>
</organism>
<dbReference type="EC" id="3.6.5.n1" evidence="1"/>
<dbReference type="EMBL" id="AP006840">
    <property type="protein sequence ID" value="BAD39467.1"/>
    <property type="molecule type" value="Genomic_DNA"/>
</dbReference>
<dbReference type="RefSeq" id="WP_011194616.1">
    <property type="nucleotide sequence ID" value="NC_006177.1"/>
</dbReference>
<dbReference type="SMR" id="Q67S76"/>
<dbReference type="STRING" id="292459.STH482"/>
<dbReference type="KEGG" id="sth:STH482"/>
<dbReference type="eggNOG" id="COG0481">
    <property type="taxonomic scope" value="Bacteria"/>
</dbReference>
<dbReference type="HOGENOM" id="CLU_009995_3_3_9"/>
<dbReference type="OrthoDB" id="9804431at2"/>
<dbReference type="Proteomes" id="UP000000417">
    <property type="component" value="Chromosome"/>
</dbReference>
<dbReference type="GO" id="GO:0005886">
    <property type="term" value="C:plasma membrane"/>
    <property type="evidence" value="ECO:0007669"/>
    <property type="project" value="UniProtKB-SubCell"/>
</dbReference>
<dbReference type="GO" id="GO:0005525">
    <property type="term" value="F:GTP binding"/>
    <property type="evidence" value="ECO:0007669"/>
    <property type="project" value="UniProtKB-UniRule"/>
</dbReference>
<dbReference type="GO" id="GO:0003924">
    <property type="term" value="F:GTPase activity"/>
    <property type="evidence" value="ECO:0007669"/>
    <property type="project" value="UniProtKB-UniRule"/>
</dbReference>
<dbReference type="GO" id="GO:0043022">
    <property type="term" value="F:ribosome binding"/>
    <property type="evidence" value="ECO:0007669"/>
    <property type="project" value="UniProtKB-UniRule"/>
</dbReference>
<dbReference type="GO" id="GO:0003746">
    <property type="term" value="F:translation elongation factor activity"/>
    <property type="evidence" value="ECO:0007669"/>
    <property type="project" value="UniProtKB-UniRule"/>
</dbReference>
<dbReference type="GO" id="GO:0045727">
    <property type="term" value="P:positive regulation of translation"/>
    <property type="evidence" value="ECO:0007669"/>
    <property type="project" value="UniProtKB-UniRule"/>
</dbReference>
<dbReference type="CDD" id="cd03699">
    <property type="entry name" value="EF4_II"/>
    <property type="match status" value="1"/>
</dbReference>
<dbReference type="CDD" id="cd16260">
    <property type="entry name" value="EF4_III"/>
    <property type="match status" value="1"/>
</dbReference>
<dbReference type="CDD" id="cd01890">
    <property type="entry name" value="LepA"/>
    <property type="match status" value="1"/>
</dbReference>
<dbReference type="CDD" id="cd03709">
    <property type="entry name" value="lepA_C"/>
    <property type="match status" value="1"/>
</dbReference>
<dbReference type="FunFam" id="3.40.50.300:FF:000078">
    <property type="entry name" value="Elongation factor 4"/>
    <property type="match status" value="1"/>
</dbReference>
<dbReference type="FunFam" id="2.40.30.10:FF:000015">
    <property type="entry name" value="Translation factor GUF1, mitochondrial"/>
    <property type="match status" value="1"/>
</dbReference>
<dbReference type="FunFam" id="3.30.70.240:FF:000007">
    <property type="entry name" value="Translation factor GUF1, mitochondrial"/>
    <property type="match status" value="1"/>
</dbReference>
<dbReference type="FunFam" id="3.30.70.2570:FF:000001">
    <property type="entry name" value="Translation factor GUF1, mitochondrial"/>
    <property type="match status" value="1"/>
</dbReference>
<dbReference type="FunFam" id="3.30.70.870:FF:000004">
    <property type="entry name" value="Translation factor GUF1, mitochondrial"/>
    <property type="match status" value="1"/>
</dbReference>
<dbReference type="Gene3D" id="3.30.70.240">
    <property type="match status" value="1"/>
</dbReference>
<dbReference type="Gene3D" id="3.30.70.2570">
    <property type="entry name" value="Elongation factor 4, C-terminal domain"/>
    <property type="match status" value="1"/>
</dbReference>
<dbReference type="Gene3D" id="3.30.70.870">
    <property type="entry name" value="Elongation Factor G (Translational Gtpase), domain 3"/>
    <property type="match status" value="1"/>
</dbReference>
<dbReference type="Gene3D" id="3.40.50.300">
    <property type="entry name" value="P-loop containing nucleotide triphosphate hydrolases"/>
    <property type="match status" value="1"/>
</dbReference>
<dbReference type="Gene3D" id="2.40.30.10">
    <property type="entry name" value="Translation factors"/>
    <property type="match status" value="1"/>
</dbReference>
<dbReference type="HAMAP" id="MF_00071">
    <property type="entry name" value="LepA"/>
    <property type="match status" value="1"/>
</dbReference>
<dbReference type="InterPro" id="IPR006297">
    <property type="entry name" value="EF-4"/>
</dbReference>
<dbReference type="InterPro" id="IPR035647">
    <property type="entry name" value="EFG_III/V"/>
</dbReference>
<dbReference type="InterPro" id="IPR000640">
    <property type="entry name" value="EFG_V-like"/>
</dbReference>
<dbReference type="InterPro" id="IPR004161">
    <property type="entry name" value="EFTu-like_2"/>
</dbReference>
<dbReference type="InterPro" id="IPR031157">
    <property type="entry name" value="G_TR_CS"/>
</dbReference>
<dbReference type="InterPro" id="IPR038363">
    <property type="entry name" value="LepA_C_sf"/>
</dbReference>
<dbReference type="InterPro" id="IPR013842">
    <property type="entry name" value="LepA_CTD"/>
</dbReference>
<dbReference type="InterPro" id="IPR035654">
    <property type="entry name" value="LepA_IV"/>
</dbReference>
<dbReference type="InterPro" id="IPR027417">
    <property type="entry name" value="P-loop_NTPase"/>
</dbReference>
<dbReference type="InterPro" id="IPR005225">
    <property type="entry name" value="Small_GTP-bd"/>
</dbReference>
<dbReference type="InterPro" id="IPR000795">
    <property type="entry name" value="T_Tr_GTP-bd_dom"/>
</dbReference>
<dbReference type="InterPro" id="IPR009000">
    <property type="entry name" value="Transl_B-barrel_sf"/>
</dbReference>
<dbReference type="NCBIfam" id="TIGR01393">
    <property type="entry name" value="lepA"/>
    <property type="match status" value="1"/>
</dbReference>
<dbReference type="NCBIfam" id="TIGR00231">
    <property type="entry name" value="small_GTP"/>
    <property type="match status" value="1"/>
</dbReference>
<dbReference type="PANTHER" id="PTHR43512:SF4">
    <property type="entry name" value="TRANSLATION FACTOR GUF1 HOMOLOG, CHLOROPLASTIC"/>
    <property type="match status" value="1"/>
</dbReference>
<dbReference type="PANTHER" id="PTHR43512">
    <property type="entry name" value="TRANSLATION FACTOR GUF1-RELATED"/>
    <property type="match status" value="1"/>
</dbReference>
<dbReference type="Pfam" id="PF00679">
    <property type="entry name" value="EFG_C"/>
    <property type="match status" value="1"/>
</dbReference>
<dbReference type="Pfam" id="PF00009">
    <property type="entry name" value="GTP_EFTU"/>
    <property type="match status" value="1"/>
</dbReference>
<dbReference type="Pfam" id="PF03144">
    <property type="entry name" value="GTP_EFTU_D2"/>
    <property type="match status" value="1"/>
</dbReference>
<dbReference type="Pfam" id="PF06421">
    <property type="entry name" value="LepA_C"/>
    <property type="match status" value="1"/>
</dbReference>
<dbReference type="PRINTS" id="PR00315">
    <property type="entry name" value="ELONGATNFCT"/>
</dbReference>
<dbReference type="SMART" id="SM00838">
    <property type="entry name" value="EFG_C"/>
    <property type="match status" value="1"/>
</dbReference>
<dbReference type="SUPFAM" id="SSF54980">
    <property type="entry name" value="EF-G C-terminal domain-like"/>
    <property type="match status" value="2"/>
</dbReference>
<dbReference type="SUPFAM" id="SSF52540">
    <property type="entry name" value="P-loop containing nucleoside triphosphate hydrolases"/>
    <property type="match status" value="1"/>
</dbReference>
<dbReference type="SUPFAM" id="SSF50447">
    <property type="entry name" value="Translation proteins"/>
    <property type="match status" value="1"/>
</dbReference>
<dbReference type="PROSITE" id="PS00301">
    <property type="entry name" value="G_TR_1"/>
    <property type="match status" value="1"/>
</dbReference>
<dbReference type="PROSITE" id="PS51722">
    <property type="entry name" value="G_TR_2"/>
    <property type="match status" value="1"/>
</dbReference>
<gene>
    <name evidence="1" type="primary">lepA</name>
    <name type="ordered locus">STH482</name>
</gene>
<reference key="1">
    <citation type="journal article" date="2004" name="Nucleic Acids Res.">
        <title>Genome sequence of Symbiobacterium thermophilum, an uncultivable bacterium that depends on microbial commensalism.</title>
        <authorList>
            <person name="Ueda K."/>
            <person name="Yamashita A."/>
            <person name="Ishikawa J."/>
            <person name="Shimada M."/>
            <person name="Watsuji T."/>
            <person name="Morimura K."/>
            <person name="Ikeda H."/>
            <person name="Hattori M."/>
            <person name="Beppu T."/>
        </authorList>
    </citation>
    <scope>NUCLEOTIDE SEQUENCE [LARGE SCALE GENOMIC DNA]</scope>
    <source>
        <strain>DSM 24528 / JCM 14929 / IAM 14863 / T</strain>
    </source>
</reference>
<accession>Q67S76</accession>
<evidence type="ECO:0000255" key="1">
    <source>
        <dbReference type="HAMAP-Rule" id="MF_00071"/>
    </source>
</evidence>
<comment type="function">
    <text evidence="1">Required for accurate and efficient protein synthesis under certain stress conditions. May act as a fidelity factor of the translation reaction, by catalyzing a one-codon backward translocation of tRNAs on improperly translocated ribosomes. Back-translocation proceeds from a post-translocation (POST) complex to a pre-translocation (PRE) complex, thus giving elongation factor G a second chance to translocate the tRNAs correctly. Binds to ribosomes in a GTP-dependent manner.</text>
</comment>
<comment type="catalytic activity">
    <reaction evidence="1">
        <text>GTP + H2O = GDP + phosphate + H(+)</text>
        <dbReference type="Rhea" id="RHEA:19669"/>
        <dbReference type="ChEBI" id="CHEBI:15377"/>
        <dbReference type="ChEBI" id="CHEBI:15378"/>
        <dbReference type="ChEBI" id="CHEBI:37565"/>
        <dbReference type="ChEBI" id="CHEBI:43474"/>
        <dbReference type="ChEBI" id="CHEBI:58189"/>
        <dbReference type="EC" id="3.6.5.n1"/>
    </reaction>
</comment>
<comment type="subcellular location">
    <subcellularLocation>
        <location evidence="1">Cell membrane</location>
        <topology evidence="1">Peripheral membrane protein</topology>
        <orientation evidence="1">Cytoplasmic side</orientation>
    </subcellularLocation>
</comment>
<comment type="similarity">
    <text evidence="1">Belongs to the TRAFAC class translation factor GTPase superfamily. Classic translation factor GTPase family. LepA subfamily.</text>
</comment>
<name>LEPA_SYMTH</name>